<name>ILVC_PSEPW</name>
<comment type="function">
    <text evidence="1">Involved in the biosynthesis of branched-chain amino acids (BCAA). Catalyzes an alkyl-migration followed by a ketol-acid reduction of (S)-2-acetolactate (S2AL) to yield (R)-2,3-dihydroxy-isovalerate. In the isomerase reaction, S2AL is rearranged via a Mg-dependent methyl migration to produce 3-hydroxy-3-methyl-2-ketobutyrate (HMKB). In the reductase reaction, this 2-ketoacid undergoes a metal-dependent reduction by NADPH to yield (R)-2,3-dihydroxy-isovalerate.</text>
</comment>
<comment type="catalytic activity">
    <reaction evidence="1">
        <text>(2R)-2,3-dihydroxy-3-methylbutanoate + NADP(+) = (2S)-2-acetolactate + NADPH + H(+)</text>
        <dbReference type="Rhea" id="RHEA:22068"/>
        <dbReference type="ChEBI" id="CHEBI:15378"/>
        <dbReference type="ChEBI" id="CHEBI:49072"/>
        <dbReference type="ChEBI" id="CHEBI:57783"/>
        <dbReference type="ChEBI" id="CHEBI:58349"/>
        <dbReference type="ChEBI" id="CHEBI:58476"/>
        <dbReference type="EC" id="1.1.1.86"/>
    </reaction>
</comment>
<comment type="catalytic activity">
    <reaction evidence="1">
        <text>(2R,3R)-2,3-dihydroxy-3-methylpentanoate + NADP(+) = (S)-2-ethyl-2-hydroxy-3-oxobutanoate + NADPH + H(+)</text>
        <dbReference type="Rhea" id="RHEA:13493"/>
        <dbReference type="ChEBI" id="CHEBI:15378"/>
        <dbReference type="ChEBI" id="CHEBI:49256"/>
        <dbReference type="ChEBI" id="CHEBI:49258"/>
        <dbReference type="ChEBI" id="CHEBI:57783"/>
        <dbReference type="ChEBI" id="CHEBI:58349"/>
        <dbReference type="EC" id="1.1.1.86"/>
    </reaction>
</comment>
<comment type="cofactor">
    <cofactor evidence="1">
        <name>Mg(2+)</name>
        <dbReference type="ChEBI" id="CHEBI:18420"/>
    </cofactor>
    <text evidence="1">Binds 2 magnesium ions per subunit.</text>
</comment>
<comment type="pathway">
    <text evidence="1">Amino-acid biosynthesis; L-isoleucine biosynthesis; L-isoleucine from 2-oxobutanoate: step 2/4.</text>
</comment>
<comment type="pathway">
    <text evidence="1">Amino-acid biosynthesis; L-valine biosynthesis; L-valine from pyruvate: step 2/4.</text>
</comment>
<comment type="similarity">
    <text evidence="1">Belongs to the ketol-acid reductoisomerase family.</text>
</comment>
<organism>
    <name type="scientific">Pseudomonas putida (strain W619)</name>
    <dbReference type="NCBI Taxonomy" id="390235"/>
    <lineage>
        <taxon>Bacteria</taxon>
        <taxon>Pseudomonadati</taxon>
        <taxon>Pseudomonadota</taxon>
        <taxon>Gammaproteobacteria</taxon>
        <taxon>Pseudomonadales</taxon>
        <taxon>Pseudomonadaceae</taxon>
        <taxon>Pseudomonas</taxon>
    </lineage>
</organism>
<proteinExistence type="inferred from homology"/>
<accession>B1J2D7</accession>
<evidence type="ECO:0000255" key="1">
    <source>
        <dbReference type="HAMAP-Rule" id="MF_00435"/>
    </source>
</evidence>
<evidence type="ECO:0000255" key="2">
    <source>
        <dbReference type="PROSITE-ProRule" id="PRU01197"/>
    </source>
</evidence>
<evidence type="ECO:0000255" key="3">
    <source>
        <dbReference type="PROSITE-ProRule" id="PRU01198"/>
    </source>
</evidence>
<gene>
    <name evidence="1" type="primary">ilvC</name>
    <name type="ordered locus">PputW619_0756</name>
</gene>
<reference key="1">
    <citation type="submission" date="2008-02" db="EMBL/GenBank/DDBJ databases">
        <title>Complete sequence of Pseudomonas putida W619.</title>
        <authorList>
            <person name="Copeland A."/>
            <person name="Lucas S."/>
            <person name="Lapidus A."/>
            <person name="Barry K."/>
            <person name="Detter J.C."/>
            <person name="Glavina del Rio T."/>
            <person name="Dalin E."/>
            <person name="Tice H."/>
            <person name="Pitluck S."/>
            <person name="Chain P."/>
            <person name="Malfatti S."/>
            <person name="Shin M."/>
            <person name="Vergez L."/>
            <person name="Schmutz J."/>
            <person name="Larimer F."/>
            <person name="Land M."/>
            <person name="Hauser L."/>
            <person name="Kyrpides N."/>
            <person name="Kim E."/>
            <person name="Taghavi S."/>
            <person name="Vangronsveld D."/>
            <person name="van der Lelie D."/>
            <person name="Richardson P."/>
        </authorList>
    </citation>
    <scope>NUCLEOTIDE SEQUENCE [LARGE SCALE GENOMIC DNA]</scope>
    <source>
        <strain>W619</strain>
    </source>
</reference>
<sequence length="338" mass="36356">MKVFYDKDCDLSIIQGKKVAIIGYGSQGHAQACNLKDSGVDVTVGLRKGSATVAKAEAHGLKVADVATAVAAADLVMILTPDEFQGALYKNEIEPNIKKGATLAFSHGFSIHYNQVVPRADLDVIMIAPKAPGHTVRSEFVKGGGIPDLIAIYQDASGNAKNVALSYASGVGGGRTGIIETTFKDETETDLFGEQAVLCGGTVELVKAGFETLVEAGYAPEMAYFECLHELKLIVDLMYEGGIANMNYSISNNAEYGEYVTGPEVINEESRKAMRNALKRIQDGEYAKMFISEGATNYPSMTAKRRNNAAHGIEVIGEQLRSMMPWISANKIVDKTKN</sequence>
<protein>
    <recommendedName>
        <fullName evidence="1">Ketol-acid reductoisomerase (NADP(+))</fullName>
        <shortName evidence="1">KARI</shortName>
        <ecNumber evidence="1">1.1.1.86</ecNumber>
    </recommendedName>
    <alternativeName>
        <fullName evidence="1">Acetohydroxy-acid isomeroreductase</fullName>
        <shortName evidence="1">AHIR</shortName>
    </alternativeName>
    <alternativeName>
        <fullName evidence="1">Alpha-keto-beta-hydroxylacyl reductoisomerase</fullName>
    </alternativeName>
    <alternativeName>
        <fullName evidence="1">Ketol-acid reductoisomerase type 1</fullName>
    </alternativeName>
    <alternativeName>
        <fullName evidence="1">Ketol-acid reductoisomerase type I</fullName>
    </alternativeName>
</protein>
<dbReference type="EC" id="1.1.1.86" evidence="1"/>
<dbReference type="EMBL" id="CP000949">
    <property type="protein sequence ID" value="ACA71261.1"/>
    <property type="molecule type" value="Genomic_DNA"/>
</dbReference>
<dbReference type="SMR" id="B1J2D7"/>
<dbReference type="STRING" id="390235.PputW619_0756"/>
<dbReference type="KEGG" id="ppw:PputW619_0756"/>
<dbReference type="eggNOG" id="COG0059">
    <property type="taxonomic scope" value="Bacteria"/>
</dbReference>
<dbReference type="HOGENOM" id="CLU_033821_0_1_6"/>
<dbReference type="OrthoDB" id="9804088at2"/>
<dbReference type="UniPathway" id="UPA00047">
    <property type="reaction ID" value="UER00056"/>
</dbReference>
<dbReference type="UniPathway" id="UPA00049">
    <property type="reaction ID" value="UER00060"/>
</dbReference>
<dbReference type="GO" id="GO:0005829">
    <property type="term" value="C:cytosol"/>
    <property type="evidence" value="ECO:0007669"/>
    <property type="project" value="TreeGrafter"/>
</dbReference>
<dbReference type="GO" id="GO:0004455">
    <property type="term" value="F:ketol-acid reductoisomerase activity"/>
    <property type="evidence" value="ECO:0007669"/>
    <property type="project" value="UniProtKB-UniRule"/>
</dbReference>
<dbReference type="GO" id="GO:0000287">
    <property type="term" value="F:magnesium ion binding"/>
    <property type="evidence" value="ECO:0007669"/>
    <property type="project" value="UniProtKB-UniRule"/>
</dbReference>
<dbReference type="GO" id="GO:0050661">
    <property type="term" value="F:NADP binding"/>
    <property type="evidence" value="ECO:0007669"/>
    <property type="project" value="InterPro"/>
</dbReference>
<dbReference type="GO" id="GO:0009097">
    <property type="term" value="P:isoleucine biosynthetic process"/>
    <property type="evidence" value="ECO:0007669"/>
    <property type="project" value="UniProtKB-UniRule"/>
</dbReference>
<dbReference type="GO" id="GO:0009099">
    <property type="term" value="P:L-valine biosynthetic process"/>
    <property type="evidence" value="ECO:0007669"/>
    <property type="project" value="UniProtKB-UniRule"/>
</dbReference>
<dbReference type="FunFam" id="3.40.50.720:FF:000023">
    <property type="entry name" value="Ketol-acid reductoisomerase (NADP(+))"/>
    <property type="match status" value="1"/>
</dbReference>
<dbReference type="Gene3D" id="6.10.240.10">
    <property type="match status" value="1"/>
</dbReference>
<dbReference type="Gene3D" id="3.40.50.720">
    <property type="entry name" value="NAD(P)-binding Rossmann-like Domain"/>
    <property type="match status" value="1"/>
</dbReference>
<dbReference type="HAMAP" id="MF_00435">
    <property type="entry name" value="IlvC"/>
    <property type="match status" value="1"/>
</dbReference>
<dbReference type="InterPro" id="IPR008927">
    <property type="entry name" value="6-PGluconate_DH-like_C_sf"/>
</dbReference>
<dbReference type="InterPro" id="IPR013023">
    <property type="entry name" value="KARI"/>
</dbReference>
<dbReference type="InterPro" id="IPR000506">
    <property type="entry name" value="KARI_C"/>
</dbReference>
<dbReference type="InterPro" id="IPR013116">
    <property type="entry name" value="KARI_N"/>
</dbReference>
<dbReference type="InterPro" id="IPR014359">
    <property type="entry name" value="KARI_prok"/>
</dbReference>
<dbReference type="InterPro" id="IPR036291">
    <property type="entry name" value="NAD(P)-bd_dom_sf"/>
</dbReference>
<dbReference type="NCBIfam" id="TIGR00465">
    <property type="entry name" value="ilvC"/>
    <property type="match status" value="1"/>
</dbReference>
<dbReference type="NCBIfam" id="NF004017">
    <property type="entry name" value="PRK05479.1"/>
    <property type="match status" value="1"/>
</dbReference>
<dbReference type="NCBIfam" id="NF009940">
    <property type="entry name" value="PRK13403.1"/>
    <property type="match status" value="1"/>
</dbReference>
<dbReference type="PANTHER" id="PTHR21371">
    <property type="entry name" value="KETOL-ACID REDUCTOISOMERASE, MITOCHONDRIAL"/>
    <property type="match status" value="1"/>
</dbReference>
<dbReference type="PANTHER" id="PTHR21371:SF1">
    <property type="entry name" value="KETOL-ACID REDUCTOISOMERASE, MITOCHONDRIAL"/>
    <property type="match status" value="1"/>
</dbReference>
<dbReference type="Pfam" id="PF01450">
    <property type="entry name" value="KARI_C"/>
    <property type="match status" value="1"/>
</dbReference>
<dbReference type="Pfam" id="PF07991">
    <property type="entry name" value="KARI_N"/>
    <property type="match status" value="1"/>
</dbReference>
<dbReference type="PIRSF" id="PIRSF000116">
    <property type="entry name" value="IlvC_gammaproteo"/>
    <property type="match status" value="1"/>
</dbReference>
<dbReference type="SUPFAM" id="SSF48179">
    <property type="entry name" value="6-phosphogluconate dehydrogenase C-terminal domain-like"/>
    <property type="match status" value="1"/>
</dbReference>
<dbReference type="SUPFAM" id="SSF51735">
    <property type="entry name" value="NAD(P)-binding Rossmann-fold domains"/>
    <property type="match status" value="1"/>
</dbReference>
<dbReference type="PROSITE" id="PS51851">
    <property type="entry name" value="KARI_C"/>
    <property type="match status" value="1"/>
</dbReference>
<dbReference type="PROSITE" id="PS51850">
    <property type="entry name" value="KARI_N"/>
    <property type="match status" value="1"/>
</dbReference>
<feature type="chain" id="PRO_1000124325" description="Ketol-acid reductoisomerase (NADP(+))">
    <location>
        <begin position="1"/>
        <end position="338"/>
    </location>
</feature>
<feature type="domain" description="KARI N-terminal Rossmann" evidence="2">
    <location>
        <begin position="1"/>
        <end position="181"/>
    </location>
</feature>
<feature type="domain" description="KARI C-terminal knotted" evidence="3">
    <location>
        <begin position="182"/>
        <end position="327"/>
    </location>
</feature>
<feature type="active site" evidence="1">
    <location>
        <position position="107"/>
    </location>
</feature>
<feature type="binding site" evidence="1">
    <location>
        <begin position="24"/>
        <end position="27"/>
    </location>
    <ligand>
        <name>NADP(+)</name>
        <dbReference type="ChEBI" id="CHEBI:58349"/>
    </ligand>
</feature>
<feature type="binding site" evidence="1">
    <location>
        <position position="47"/>
    </location>
    <ligand>
        <name>NADP(+)</name>
        <dbReference type="ChEBI" id="CHEBI:58349"/>
    </ligand>
</feature>
<feature type="binding site" evidence="1">
    <location>
        <position position="50"/>
    </location>
    <ligand>
        <name>NADP(+)</name>
        <dbReference type="ChEBI" id="CHEBI:58349"/>
    </ligand>
</feature>
<feature type="binding site" evidence="1">
    <location>
        <position position="52"/>
    </location>
    <ligand>
        <name>NADP(+)</name>
        <dbReference type="ChEBI" id="CHEBI:58349"/>
    </ligand>
</feature>
<feature type="binding site" evidence="1">
    <location>
        <begin position="82"/>
        <end position="85"/>
    </location>
    <ligand>
        <name>NADP(+)</name>
        <dbReference type="ChEBI" id="CHEBI:58349"/>
    </ligand>
</feature>
<feature type="binding site" evidence="1">
    <location>
        <position position="133"/>
    </location>
    <ligand>
        <name>NADP(+)</name>
        <dbReference type="ChEBI" id="CHEBI:58349"/>
    </ligand>
</feature>
<feature type="binding site" evidence="1">
    <location>
        <position position="190"/>
    </location>
    <ligand>
        <name>Mg(2+)</name>
        <dbReference type="ChEBI" id="CHEBI:18420"/>
        <label>1</label>
    </ligand>
</feature>
<feature type="binding site" evidence="1">
    <location>
        <position position="190"/>
    </location>
    <ligand>
        <name>Mg(2+)</name>
        <dbReference type="ChEBI" id="CHEBI:18420"/>
        <label>2</label>
    </ligand>
</feature>
<feature type="binding site" evidence="1">
    <location>
        <position position="194"/>
    </location>
    <ligand>
        <name>Mg(2+)</name>
        <dbReference type="ChEBI" id="CHEBI:18420"/>
        <label>1</label>
    </ligand>
</feature>
<feature type="binding site" evidence="1">
    <location>
        <position position="226"/>
    </location>
    <ligand>
        <name>Mg(2+)</name>
        <dbReference type="ChEBI" id="CHEBI:18420"/>
        <label>2</label>
    </ligand>
</feature>
<feature type="binding site" evidence="1">
    <location>
        <position position="230"/>
    </location>
    <ligand>
        <name>Mg(2+)</name>
        <dbReference type="ChEBI" id="CHEBI:18420"/>
        <label>2</label>
    </ligand>
</feature>
<feature type="binding site" evidence="1">
    <location>
        <position position="251"/>
    </location>
    <ligand>
        <name>substrate</name>
    </ligand>
</feature>
<keyword id="KW-0028">Amino-acid biosynthesis</keyword>
<keyword id="KW-0100">Branched-chain amino acid biosynthesis</keyword>
<keyword id="KW-0460">Magnesium</keyword>
<keyword id="KW-0479">Metal-binding</keyword>
<keyword id="KW-0521">NADP</keyword>
<keyword id="KW-0560">Oxidoreductase</keyword>